<feature type="chain" id="PRO_0000038159" description="Small delta antigen">
    <location>
        <begin position="1"/>
        <end position="195"/>
    </location>
</feature>
<feature type="domain" description="HDAg" evidence="4">
    <location>
        <begin position="20"/>
        <end position="195"/>
    </location>
</feature>
<feature type="region of interest" description="Dimerization" evidence="3">
    <location>
        <begin position="12"/>
        <end position="60"/>
    </location>
</feature>
<feature type="region of interest" description="Disordered" evidence="5">
    <location>
        <begin position="45"/>
        <end position="195"/>
    </location>
</feature>
<feature type="region of interest" description="RNA-binding" evidence="4">
    <location>
        <begin position="97"/>
        <end position="107"/>
    </location>
</feature>
<feature type="region of interest" description="RNAPII-binding" evidence="4">
    <location>
        <begin position="130"/>
        <end position="195"/>
    </location>
</feature>
<feature type="region of interest" description="RNA-binding" evidence="4">
    <location>
        <begin position="136"/>
        <end position="146"/>
    </location>
</feature>
<feature type="short sequence motif" description="Nuclear localization signal" evidence="2">
    <location>
        <begin position="66"/>
        <end position="75"/>
    </location>
</feature>
<feature type="compositionally biased region" description="Basic and acidic residues" evidence="5">
    <location>
        <begin position="94"/>
        <end position="112"/>
    </location>
</feature>
<feature type="compositionally biased region" description="Basic and acidic residues" evidence="5">
    <location>
        <begin position="129"/>
        <end position="144"/>
    </location>
</feature>
<feature type="compositionally biased region" description="Gly residues" evidence="5">
    <location>
        <begin position="158"/>
        <end position="167"/>
    </location>
</feature>
<feature type="modified residue" description="Phosphoserine; by host CK2" evidence="2">
    <location>
        <position position="2"/>
    </location>
</feature>
<feature type="modified residue" description="Omega-N-methylated arginine; by host PRMT1" evidence="2">
    <location>
        <position position="13"/>
    </location>
</feature>
<feature type="modified residue" description="N6-acetyllysine; by host" evidence="2">
    <location>
        <position position="72"/>
    </location>
</feature>
<feature type="modified residue" description="Phosphoserine; by host" evidence="2">
    <location>
        <position position="123"/>
    </location>
</feature>
<feature type="modified residue" description="Phosphoserine; by host MAPK1 and MAPK3" evidence="2">
    <location>
        <position position="177"/>
    </location>
</feature>
<feature type="modified residue" description="Phosphothreonine; by host" evidence="2">
    <location>
        <position position="182"/>
    </location>
</feature>
<feature type="sequence variant" description="In strain: Isolate Woodchuck5.">
    <original>G</original>
    <variation>R</variation>
    <location>
        <position position="11"/>
    </location>
</feature>
<feature type="sequence variant" description="In strain: Isolate Woodchuck5.">
    <original>R</original>
    <variation>G</variation>
    <location>
        <position position="86"/>
    </location>
</feature>
<feature type="sequence variant" description="In strain: Isolate Woodchuck5.">
    <original>D</original>
    <variation>E</variation>
    <location>
        <position position="96"/>
    </location>
</feature>
<evidence type="ECO:0000250" key="1"/>
<evidence type="ECO:0000250" key="2">
    <source>
        <dbReference type="UniProtKB" id="P0C6L3"/>
    </source>
</evidence>
<evidence type="ECO:0000255" key="3"/>
<evidence type="ECO:0000255" key="4">
    <source>
        <dbReference type="PROSITE-ProRule" id="PRU01183"/>
    </source>
</evidence>
<evidence type="ECO:0000256" key="5">
    <source>
        <dbReference type="SAM" id="MobiDB-lite"/>
    </source>
</evidence>
<evidence type="ECO:0000269" key="6">
    <source>
    </source>
</evidence>
<evidence type="ECO:0000305" key="7"/>
<organism>
    <name type="scientific">Hepatitis delta virus genotype I (isolate Woodchuck)</name>
    <name type="common">HDV</name>
    <dbReference type="NCBI Taxonomy" id="31764"/>
    <lineage>
        <taxon>Viruses</taxon>
        <taxon>Ribozyviria</taxon>
        <taxon>Kolmioviridae</taxon>
        <taxon>Deltavirus</taxon>
        <taxon>Hepatitis delta virus</taxon>
    </lineage>
</organism>
<name>SHDAG_HDVWO</name>
<dbReference type="EMBL" id="M21012">
    <property type="protein sequence ID" value="AAA45723.1"/>
    <property type="molecule type" value="Genomic_RNA"/>
</dbReference>
<dbReference type="EMBL" id="AJ307077">
    <property type="protein sequence ID" value="CAC32837.1"/>
    <property type="molecule type" value="Genomic_RNA"/>
</dbReference>
<dbReference type="PIR" id="A30054">
    <property type="entry name" value="SAVLWC"/>
</dbReference>
<dbReference type="SMR" id="P29997"/>
<dbReference type="Proteomes" id="UP000008686">
    <property type="component" value="Segment"/>
</dbReference>
<dbReference type="Proteomes" id="UP000129583">
    <property type="component" value="Genome"/>
</dbReference>
<dbReference type="GO" id="GO:0043657">
    <property type="term" value="C:host cell"/>
    <property type="evidence" value="ECO:0007669"/>
    <property type="project" value="GOC"/>
</dbReference>
<dbReference type="GO" id="GO:0042025">
    <property type="term" value="C:host cell nucleus"/>
    <property type="evidence" value="ECO:0007669"/>
    <property type="project" value="UniProtKB-SubCell"/>
</dbReference>
<dbReference type="GO" id="GO:0044423">
    <property type="term" value="C:virion component"/>
    <property type="evidence" value="ECO:0007669"/>
    <property type="project" value="UniProtKB-KW"/>
</dbReference>
<dbReference type="GO" id="GO:0003723">
    <property type="term" value="F:RNA binding"/>
    <property type="evidence" value="ECO:0007669"/>
    <property type="project" value="UniProtKB-KW"/>
</dbReference>
<dbReference type="GO" id="GO:0046718">
    <property type="term" value="P:symbiont entry into host cell"/>
    <property type="evidence" value="ECO:0007669"/>
    <property type="project" value="UniProtKB-KW"/>
</dbReference>
<dbReference type="GO" id="GO:0075732">
    <property type="term" value="P:viral penetration into host nucleus"/>
    <property type="evidence" value="ECO:0007669"/>
    <property type="project" value="UniProtKB-KW"/>
</dbReference>
<dbReference type="Gene3D" id="4.10.220.40">
    <property type="entry name" value="Delta antigen, N-terminal"/>
    <property type="match status" value="1"/>
</dbReference>
<dbReference type="InterPro" id="IPR027403">
    <property type="entry name" value="Delta_antigen_N"/>
</dbReference>
<dbReference type="InterPro" id="IPR037517">
    <property type="entry name" value="HDAG_dom"/>
</dbReference>
<dbReference type="InterPro" id="IPR002506">
    <property type="entry name" value="HDV_ag"/>
</dbReference>
<dbReference type="Pfam" id="PF01517">
    <property type="entry name" value="HDV_ag"/>
    <property type="match status" value="1"/>
</dbReference>
<dbReference type="SUPFAM" id="SSF58108">
    <property type="entry name" value="Oligomerization domain of hepatitis delta antigen"/>
    <property type="match status" value="1"/>
</dbReference>
<dbReference type="PROSITE" id="PS51838">
    <property type="entry name" value="HDAG"/>
    <property type="match status" value="1"/>
</dbReference>
<proteinExistence type="inferred from homology"/>
<comment type="function">
    <text evidence="1">Promotes both transcription and replication of genomic RNA. Following virus entry into host cell, provides nuclear import of HDV RNPs thanks to its nuclear localization signal. May interact with host RNA polymerase II thereby changing its template requirement from DNA to RNA. RNA pol II complex would then acts as an RNA-directed RNA polymerase, and transcribe and replicate HDV genome (By similarity).</text>
</comment>
<comment type="subunit">
    <text evidence="1">Homodimer. Homooctamer. Interacts with host RNA polymerase II complex, and with host NPM1.</text>
</comment>
<comment type="subcellular location">
    <subcellularLocation>
        <location>Virion</location>
    </subcellularLocation>
    <subcellularLocation>
        <location evidence="1">Host nucleus</location>
    </subcellularLocation>
</comment>
<comment type="PTM">
    <text evidence="1">Phosphorylated at serines and threonines by host MAPK1/3, PKR, and CK2.</text>
</comment>
<comment type="PTM">
    <text evidence="1">Acetylation modulates nuclear localization. Neo-synthesized genomic RNA migrates from the nucleus to the cytoplasm, where they interact with S-HDAg, which once acetylated redirect both partners to the nucleus (By similarity).</text>
</comment>
<comment type="PTM">
    <text evidence="1">Methylation plays a role in viral genome replication.</text>
</comment>
<comment type="RNA editing">
    <location>
        <position position="196" evidence="6"/>
    </location>
    <text evidence="1">Partially edited. RNA editing at this position occurs on the antigenomic strand and consists of a conversion of A to G catalyzed by the cellular enzyme ADAR1. The unedited RNA version gives rise to the small delta antigen, which ends with a nonsense codon at position 196. In the edited version, this amber codon is modified to a tryptophan codon and gives rise to the large delta antigen protein (AC P0C6M9). S-HDAg suppresses editing of non-replicating antigenomic RNA, thereby regulating the extent of editing (By similarity).</text>
</comment>
<comment type="miscellaneous">
    <text>This strain belongs to the genotype I found in North America, Europe, Africa, East and West Asia and the South Pacific.</text>
</comment>
<comment type="similarity">
    <text evidence="7">Belongs to the hepatitis delta antigen family.</text>
</comment>
<keyword id="KW-0007">Acetylation</keyword>
<keyword id="KW-1048">Host nucleus</keyword>
<keyword id="KW-0945">Host-virus interaction</keyword>
<keyword id="KW-0488">Methylation</keyword>
<keyword id="KW-0597">Phosphoprotein</keyword>
<keyword id="KW-0691">RNA editing</keyword>
<keyword id="KW-0694">RNA-binding</keyword>
<keyword id="KW-1163">Viral penetration into host nucleus</keyword>
<keyword id="KW-0946">Virion</keyword>
<keyword id="KW-1160">Virus entry into host cell</keyword>
<organismHost>
    <name type="scientific">Homo sapiens</name>
    <name type="common">Human</name>
    <dbReference type="NCBI Taxonomy" id="9606"/>
</organismHost>
<protein>
    <recommendedName>
        <fullName>Small delta antigen</fullName>
        <shortName>S-HDAg</shortName>
    </recommendedName>
    <alternativeName>
        <fullName>p24</fullName>
    </alternativeName>
</protein>
<sequence>MSRSESRKNRGGREEILEQWVAGRKKLEELERDLRKTKKKLKKIEDENPWLGNIKGILGKKDKDGEGAPPAKRARTDQMEVDSGPRKRPLRGGFTDKERQDHRRRKALENKKKQLSAGGKNLSKEEEEELRRLTEEDERRERRVAGPPVGGVNPLEGGSRGAPGGGFVPNLQGVPESPFSRTGEGLDIRGNQGFP</sequence>
<accession>P29997</accession>
<accession>Q999V2</accession>
<accession>Q999V3</accession>
<reference key="1">
    <citation type="journal article" date="1988" name="J. Virol.">
        <title>Molecular cloning of hepatitis delta virus RNA from an infected woodchuck liver: sequence, structure, and applications.</title>
        <authorList>
            <person name="Kuo M.Y.P."/>
            <person name="Goldberg J."/>
            <person name="Coates L."/>
            <person name="Mason W."/>
            <person name="Gerin J."/>
            <person name="Taylor J."/>
        </authorList>
    </citation>
    <scope>NUCLEOTIDE SEQUENCE [GENOMIC RNA]</scope>
</reference>
<reference key="2">
    <citation type="journal article" date="1991" name="J. Gen. Virol.">
        <title>Nucleotide sequence analysis of three different hepatitis delta viruses isolated from a woodchuck and humans.</title>
        <authorList>
            <person name="Deny P."/>
            <person name="Zignego A.L."/>
            <person name="Rascalou N."/>
            <person name="Ponzetto A."/>
            <person name="Tiollais P."/>
            <person name="Brechot C."/>
        </authorList>
    </citation>
    <scope>NUCLEOTIDE SEQUENCE [GENOMIC RNA]</scope>
    <scope>RNA EDITING</scope>
    <source>
        <strain>Isolate Woodchuck5</strain>
    </source>
</reference>
<reference key="3">
    <citation type="journal article" date="2005" name="Acta Virol.">
        <title>Hepatitis D.</title>
        <authorList>
            <person name="Husa P."/>
            <person name="Linhartova A."/>
            <person name="Nemecek V."/>
            <person name="Husova L."/>
        </authorList>
    </citation>
    <scope>REVIEW</scope>
</reference>
<reference key="4">
    <citation type="journal article" date="2006" name="Curr. Top. Microbiol. Immunol.">
        <title>Post-translational modification of delta antigen of hepatitis D virus.</title>
        <authorList>
            <person name="Huang W.H."/>
            <person name="Chen C.W."/>
            <person name="Wu H.L."/>
            <person name="Chen P.J."/>
        </authorList>
    </citation>
    <scope>REVIEW</scope>
</reference>